<organism>
    <name type="scientific">Neurospora crassa (strain ATCC 24698 / 74-OR23-1A / CBS 708.71 / DSM 1257 / FGSC 987)</name>
    <dbReference type="NCBI Taxonomy" id="367110"/>
    <lineage>
        <taxon>Eukaryota</taxon>
        <taxon>Fungi</taxon>
        <taxon>Dikarya</taxon>
        <taxon>Ascomycota</taxon>
        <taxon>Pezizomycotina</taxon>
        <taxon>Sordariomycetes</taxon>
        <taxon>Sordariomycetidae</taxon>
        <taxon>Sordariales</taxon>
        <taxon>Sordariaceae</taxon>
        <taxon>Neurospora</taxon>
    </lineage>
</organism>
<accession>Q9P5L2</accession>
<reference key="1">
    <citation type="journal article" date="2003" name="Nucleic Acids Res.">
        <title>What's in the genome of a filamentous fungus? Analysis of the Neurospora genome sequence.</title>
        <authorList>
            <person name="Mannhaupt G."/>
            <person name="Montrone C."/>
            <person name="Haase D."/>
            <person name="Mewes H.-W."/>
            <person name="Aign V."/>
            <person name="Hoheisel J.D."/>
            <person name="Fartmann B."/>
            <person name="Nyakatura G."/>
            <person name="Kempken F."/>
            <person name="Maier J."/>
            <person name="Schulte U."/>
        </authorList>
    </citation>
    <scope>NUCLEOTIDE SEQUENCE [LARGE SCALE GENOMIC DNA]</scope>
    <source>
        <strain>ATCC 24698 / 74-OR23-1A / CBS 708.71 / DSM 1257 / FGSC 987</strain>
    </source>
</reference>
<reference key="2">
    <citation type="journal article" date="2003" name="Nature">
        <title>The genome sequence of the filamentous fungus Neurospora crassa.</title>
        <authorList>
            <person name="Galagan J.E."/>
            <person name="Calvo S.E."/>
            <person name="Borkovich K.A."/>
            <person name="Selker E.U."/>
            <person name="Read N.D."/>
            <person name="Jaffe D.B."/>
            <person name="FitzHugh W."/>
            <person name="Ma L.-J."/>
            <person name="Smirnov S."/>
            <person name="Purcell S."/>
            <person name="Rehman B."/>
            <person name="Elkins T."/>
            <person name="Engels R."/>
            <person name="Wang S."/>
            <person name="Nielsen C.B."/>
            <person name="Butler J."/>
            <person name="Endrizzi M."/>
            <person name="Qui D."/>
            <person name="Ianakiev P."/>
            <person name="Bell-Pedersen D."/>
            <person name="Nelson M.A."/>
            <person name="Werner-Washburne M."/>
            <person name="Selitrennikoff C.P."/>
            <person name="Kinsey J.A."/>
            <person name="Braun E.L."/>
            <person name="Zelter A."/>
            <person name="Schulte U."/>
            <person name="Kothe G.O."/>
            <person name="Jedd G."/>
            <person name="Mewes H.-W."/>
            <person name="Staben C."/>
            <person name="Marcotte E."/>
            <person name="Greenberg D."/>
            <person name="Roy A."/>
            <person name="Foley K."/>
            <person name="Naylor J."/>
            <person name="Stange-Thomann N."/>
            <person name="Barrett R."/>
            <person name="Gnerre S."/>
            <person name="Kamal M."/>
            <person name="Kamvysselis M."/>
            <person name="Mauceli E.W."/>
            <person name="Bielke C."/>
            <person name="Rudd S."/>
            <person name="Frishman D."/>
            <person name="Krystofova S."/>
            <person name="Rasmussen C."/>
            <person name="Metzenberg R.L."/>
            <person name="Perkins D.D."/>
            <person name="Kroken S."/>
            <person name="Cogoni C."/>
            <person name="Macino G."/>
            <person name="Catcheside D.E.A."/>
            <person name="Li W."/>
            <person name="Pratt R.J."/>
            <person name="Osmani S.A."/>
            <person name="DeSouza C.P.C."/>
            <person name="Glass N.L."/>
            <person name="Orbach M.J."/>
            <person name="Berglund J.A."/>
            <person name="Voelker R."/>
            <person name="Yarden O."/>
            <person name="Plamann M."/>
            <person name="Seiler S."/>
            <person name="Dunlap J.C."/>
            <person name="Radford A."/>
            <person name="Aramayo R."/>
            <person name="Natvig D.O."/>
            <person name="Alex L.A."/>
            <person name="Mannhaupt G."/>
            <person name="Ebbole D.J."/>
            <person name="Freitag M."/>
            <person name="Paulsen I."/>
            <person name="Sachs M.S."/>
            <person name="Lander E.S."/>
            <person name="Nusbaum C."/>
            <person name="Birren B.W."/>
        </authorList>
    </citation>
    <scope>NUCLEOTIDE SEQUENCE [LARGE SCALE GENOMIC DNA]</scope>
    <source>
        <strain>ATCC 24698 / 74-OR23-1A / CBS 708.71 / DSM 1257 / FGSC 987</strain>
    </source>
</reference>
<proteinExistence type="inferred from homology"/>
<gene>
    <name type="primary">fmp-52</name>
    <name type="ORF">B23L21.170</name>
    <name type="ORF">NCU03908</name>
</gene>
<sequence length="242" mass="25810">MSTSTPTSTALIGSTGLVGSHILSTLLTSPTTSSQVQTISRRAPANPTNSSRLSPTVNADTSTWPTLLSSLVPLPTTVISSLGTTRVAAGGIANQWKIDHDLNVDLAKAAKQAGVKNFVFISSAGTRGALSTKVPYSQMKRGVEDTIQSLDFEHGIILRPGLILGEREKAQHAGQGLLYGLVRGLGRWVSLGVQDRFAQEAEVIARAAVKAAKMAEEGKAPGKWWVLEQDEIVKLGREEWKE</sequence>
<feature type="transit peptide" description="Mitochondrion">
    <location>
        <begin position="1"/>
        <end position="87"/>
    </location>
</feature>
<feature type="chain" id="PRO_0000301827" description="Protein fmp-52, mitochondrial">
    <location>
        <begin position="88"/>
        <end position="242"/>
    </location>
</feature>
<feature type="region of interest" description="Disordered" evidence="2">
    <location>
        <begin position="33"/>
        <end position="58"/>
    </location>
</feature>
<feature type="compositionally biased region" description="Polar residues" evidence="2">
    <location>
        <begin position="35"/>
        <end position="58"/>
    </location>
</feature>
<dbReference type="EMBL" id="AL356172">
    <property type="protein sequence ID" value="CAB91685.1"/>
    <property type="molecule type" value="Genomic_DNA"/>
</dbReference>
<dbReference type="EMBL" id="CM002241">
    <property type="protein sequence ID" value="EAA28311.1"/>
    <property type="molecule type" value="Genomic_DNA"/>
</dbReference>
<dbReference type="PIR" id="T49704">
    <property type="entry name" value="T49704"/>
</dbReference>
<dbReference type="RefSeq" id="XP_957547.1">
    <property type="nucleotide sequence ID" value="XM_952454.3"/>
</dbReference>
<dbReference type="SMR" id="Q9P5L2"/>
<dbReference type="FunCoup" id="Q9P5L2">
    <property type="interactions" value="90"/>
</dbReference>
<dbReference type="STRING" id="367110.Q9P5L2"/>
<dbReference type="PaxDb" id="5141-EFNCRP00000003591"/>
<dbReference type="EnsemblFungi" id="EAA28311">
    <property type="protein sequence ID" value="EAA28311"/>
    <property type="gene ID" value="NCU03908"/>
</dbReference>
<dbReference type="GeneID" id="3873701"/>
<dbReference type="KEGG" id="ncr:NCU03908"/>
<dbReference type="VEuPathDB" id="FungiDB:NCU03908"/>
<dbReference type="HOGENOM" id="CLU_071330_3_0_1"/>
<dbReference type="InParanoid" id="Q9P5L2"/>
<dbReference type="OMA" id="CIENAKA"/>
<dbReference type="OrthoDB" id="430436at2759"/>
<dbReference type="Proteomes" id="UP000001805">
    <property type="component" value="Chromosome 5, Linkage Group VI"/>
</dbReference>
<dbReference type="GO" id="GO:0005737">
    <property type="term" value="C:cytoplasm"/>
    <property type="evidence" value="ECO:0000318"/>
    <property type="project" value="GO_Central"/>
</dbReference>
<dbReference type="GO" id="GO:0005741">
    <property type="term" value="C:mitochondrial outer membrane"/>
    <property type="evidence" value="ECO:0007669"/>
    <property type="project" value="UniProtKB-SubCell"/>
</dbReference>
<dbReference type="GO" id="GO:0051170">
    <property type="term" value="P:import into nucleus"/>
    <property type="evidence" value="ECO:0000318"/>
    <property type="project" value="GO_Central"/>
</dbReference>
<dbReference type="CDD" id="cd05250">
    <property type="entry name" value="CC3_like_SDR_a"/>
    <property type="match status" value="1"/>
</dbReference>
<dbReference type="FunFam" id="3.40.50.720:FF:000366">
    <property type="entry name" value="Protein FMP52, mitochondrial"/>
    <property type="match status" value="1"/>
</dbReference>
<dbReference type="Gene3D" id="3.40.50.720">
    <property type="entry name" value="NAD(P)-binding Rossmann-like Domain"/>
    <property type="match status" value="1"/>
</dbReference>
<dbReference type="InterPro" id="IPR001509">
    <property type="entry name" value="Epimerase_deHydtase"/>
</dbReference>
<dbReference type="InterPro" id="IPR036291">
    <property type="entry name" value="NAD(P)-bd_dom_sf"/>
</dbReference>
<dbReference type="PANTHER" id="PTHR14097">
    <property type="entry name" value="OXIDOREDUCTASE HTATIP2"/>
    <property type="match status" value="1"/>
</dbReference>
<dbReference type="PANTHER" id="PTHR14097:SF7">
    <property type="entry name" value="OXIDOREDUCTASE HTATIP2"/>
    <property type="match status" value="1"/>
</dbReference>
<dbReference type="Pfam" id="PF01370">
    <property type="entry name" value="Epimerase"/>
    <property type="match status" value="1"/>
</dbReference>
<dbReference type="SUPFAM" id="SSF51735">
    <property type="entry name" value="NAD(P)-binding Rossmann-fold domains"/>
    <property type="match status" value="1"/>
</dbReference>
<evidence type="ECO:0000250" key="1"/>
<evidence type="ECO:0000256" key="2">
    <source>
        <dbReference type="SAM" id="MobiDB-lite"/>
    </source>
</evidence>
<evidence type="ECO:0000305" key="3"/>
<comment type="subcellular location">
    <subcellularLocation>
        <location evidence="1">Mitochondrion outer membrane</location>
        <topology evidence="1">Peripheral membrane protein</topology>
    </subcellularLocation>
</comment>
<comment type="similarity">
    <text evidence="3">Belongs to the FMP52 family.</text>
</comment>
<protein>
    <recommendedName>
        <fullName>Protein fmp-52, mitochondrial</fullName>
    </recommendedName>
</protein>
<name>FMP52_NEUCR</name>
<keyword id="KW-0472">Membrane</keyword>
<keyword id="KW-0496">Mitochondrion</keyword>
<keyword id="KW-1000">Mitochondrion outer membrane</keyword>
<keyword id="KW-1185">Reference proteome</keyword>
<keyword id="KW-0809">Transit peptide</keyword>